<sequence length="353" mass="38951">MTAILERRESESLWGRFCNWITSTENRLYIGWFGVLMIPTLLTATSVFIIAFIAAPPVDIDGIREPVSGSLLYGNNIISGAIIPTSAAIGLHFYPIWEAASVDEWLYNGGPYELIVLHFLLGVACYMGREWELSFRLGMRPWIAVAYSAPVAAATAVFLIYPIGQGSFSDGMPLGISGTFNFMIVFQAEHNILMHPFHMLGVAGVFGGSLFSAMHGSLVTSSLIRETTENESANEGYRFGQEEETYNIVAAHGYFGRLIFQYASFNNSRSLHFFLAAWPVVGIWFTALGISTMAFNLNGFNFNQSVVDSQGRVINTWADIINRANLGMEVMHERNAHNFPLDLAAIEAPSTNG</sequence>
<dbReference type="EC" id="1.10.3.9" evidence="1"/>
<dbReference type="EMBL" id="X08016">
    <property type="protein sequence ID" value="CAA30817.1"/>
    <property type="molecule type" value="Genomic_DNA"/>
</dbReference>
<dbReference type="EMBL" id="X08017">
    <property type="protein sequence ID" value="CAA30818.1"/>
    <property type="molecule type" value="Genomic_DNA"/>
</dbReference>
<dbReference type="PIR" id="S02169">
    <property type="entry name" value="F2NT1C"/>
</dbReference>
<dbReference type="SMR" id="P69562"/>
<dbReference type="GO" id="GO:0009535">
    <property type="term" value="C:chloroplast thylakoid membrane"/>
    <property type="evidence" value="ECO:0007669"/>
    <property type="project" value="UniProtKB-SubCell"/>
</dbReference>
<dbReference type="GO" id="GO:0009523">
    <property type="term" value="C:photosystem II"/>
    <property type="evidence" value="ECO:0007669"/>
    <property type="project" value="UniProtKB-KW"/>
</dbReference>
<dbReference type="GO" id="GO:0016168">
    <property type="term" value="F:chlorophyll binding"/>
    <property type="evidence" value="ECO:0007669"/>
    <property type="project" value="UniProtKB-UniRule"/>
</dbReference>
<dbReference type="GO" id="GO:0045156">
    <property type="term" value="F:electron transporter, transferring electrons within the cyclic electron transport pathway of photosynthesis activity"/>
    <property type="evidence" value="ECO:0007669"/>
    <property type="project" value="InterPro"/>
</dbReference>
<dbReference type="GO" id="GO:0005506">
    <property type="term" value="F:iron ion binding"/>
    <property type="evidence" value="ECO:0007669"/>
    <property type="project" value="UniProtKB-UniRule"/>
</dbReference>
<dbReference type="GO" id="GO:0016682">
    <property type="term" value="F:oxidoreductase activity, acting on diphenols and related substances as donors, oxygen as acceptor"/>
    <property type="evidence" value="ECO:0007669"/>
    <property type="project" value="UniProtKB-UniRule"/>
</dbReference>
<dbReference type="GO" id="GO:0010242">
    <property type="term" value="F:oxygen evolving activity"/>
    <property type="evidence" value="ECO:0007669"/>
    <property type="project" value="UniProtKB-EC"/>
</dbReference>
<dbReference type="GO" id="GO:0009772">
    <property type="term" value="P:photosynthetic electron transport in photosystem II"/>
    <property type="evidence" value="ECO:0007669"/>
    <property type="project" value="InterPro"/>
</dbReference>
<dbReference type="GO" id="GO:0009635">
    <property type="term" value="P:response to herbicide"/>
    <property type="evidence" value="ECO:0007669"/>
    <property type="project" value="UniProtKB-KW"/>
</dbReference>
<dbReference type="CDD" id="cd09289">
    <property type="entry name" value="Photosystem-II_D1"/>
    <property type="match status" value="1"/>
</dbReference>
<dbReference type="FunFam" id="1.20.85.10:FF:000002">
    <property type="entry name" value="Photosystem II protein D1"/>
    <property type="match status" value="1"/>
</dbReference>
<dbReference type="Gene3D" id="1.20.85.10">
    <property type="entry name" value="Photosystem II protein D1-like"/>
    <property type="match status" value="1"/>
</dbReference>
<dbReference type="HAMAP" id="MF_01379">
    <property type="entry name" value="PSII_PsbA_D1"/>
    <property type="match status" value="1"/>
</dbReference>
<dbReference type="InterPro" id="IPR055266">
    <property type="entry name" value="D1/D2"/>
</dbReference>
<dbReference type="InterPro" id="IPR036854">
    <property type="entry name" value="Photo_II_D1/D2_sf"/>
</dbReference>
<dbReference type="InterPro" id="IPR000484">
    <property type="entry name" value="Photo_RC_L/M"/>
</dbReference>
<dbReference type="InterPro" id="IPR055265">
    <property type="entry name" value="Photo_RC_L/M_CS"/>
</dbReference>
<dbReference type="InterPro" id="IPR005867">
    <property type="entry name" value="PSII_D1"/>
</dbReference>
<dbReference type="NCBIfam" id="TIGR01151">
    <property type="entry name" value="psbA"/>
    <property type="match status" value="1"/>
</dbReference>
<dbReference type="PANTHER" id="PTHR33149:SF12">
    <property type="entry name" value="PHOTOSYSTEM II D2 PROTEIN"/>
    <property type="match status" value="1"/>
</dbReference>
<dbReference type="PANTHER" id="PTHR33149">
    <property type="entry name" value="PHOTOSYSTEM II PROTEIN D1"/>
    <property type="match status" value="1"/>
</dbReference>
<dbReference type="Pfam" id="PF00124">
    <property type="entry name" value="Photo_RC"/>
    <property type="match status" value="1"/>
</dbReference>
<dbReference type="PRINTS" id="PR00256">
    <property type="entry name" value="REACTNCENTRE"/>
</dbReference>
<dbReference type="SUPFAM" id="SSF81483">
    <property type="entry name" value="Bacterial photosystem II reaction centre, L and M subunits"/>
    <property type="match status" value="1"/>
</dbReference>
<dbReference type="PROSITE" id="PS00244">
    <property type="entry name" value="REACTION_CENTER"/>
    <property type="match status" value="1"/>
</dbReference>
<keyword id="KW-0007">Acetylation</keyword>
<keyword id="KW-0106">Calcium</keyword>
<keyword id="KW-0148">Chlorophyll</keyword>
<keyword id="KW-0150">Chloroplast</keyword>
<keyword id="KW-0157">Chromophore</keyword>
<keyword id="KW-0249">Electron transport</keyword>
<keyword id="KW-0359">Herbicide resistance</keyword>
<keyword id="KW-0408">Iron</keyword>
<keyword id="KW-0460">Magnesium</keyword>
<keyword id="KW-0464">Manganese</keyword>
<keyword id="KW-0472">Membrane</keyword>
<keyword id="KW-0479">Metal-binding</keyword>
<keyword id="KW-0560">Oxidoreductase</keyword>
<keyword id="KW-0597">Phosphoprotein</keyword>
<keyword id="KW-0602">Photosynthesis</keyword>
<keyword id="KW-0604">Photosystem II</keyword>
<keyword id="KW-0934">Plastid</keyword>
<keyword id="KW-0793">Thylakoid</keyword>
<keyword id="KW-0812">Transmembrane</keyword>
<keyword id="KW-1133">Transmembrane helix</keyword>
<keyword id="KW-0813">Transport</keyword>
<gene>
    <name evidence="1" type="primary">psbA</name>
</gene>
<reference key="1">
    <citation type="journal article" date="1988" name="Nucleic Acids Res.">
        <title>Sequence of the psbA gene from wild type and triazin-resistant Nicotiana plumbaginifolia.</title>
        <authorList>
            <person name="Pay A."/>
            <person name="Smith M.A."/>
            <person name="Nagy F."/>
            <person name="Marton L."/>
        </authorList>
    </citation>
    <scope>NUCLEOTIDE SEQUENCE [GENOMIC DNA]</scope>
    <source>
        <strain>cv. TBR2</strain>
        <tissue>Leaf</tissue>
    </source>
</reference>
<accession>P69562</accession>
<accession>P02955</accession>
<organism>
    <name type="scientific">Nicotiana plumbaginifolia</name>
    <name type="common">Leadwort-leaved tobacco</name>
    <name type="synonym">Tex-Mex tobacco</name>
    <dbReference type="NCBI Taxonomy" id="4092"/>
    <lineage>
        <taxon>Eukaryota</taxon>
        <taxon>Viridiplantae</taxon>
        <taxon>Streptophyta</taxon>
        <taxon>Embryophyta</taxon>
        <taxon>Tracheophyta</taxon>
        <taxon>Spermatophyta</taxon>
        <taxon>Magnoliopsida</taxon>
        <taxon>eudicotyledons</taxon>
        <taxon>Gunneridae</taxon>
        <taxon>Pentapetalae</taxon>
        <taxon>asterids</taxon>
        <taxon>lamiids</taxon>
        <taxon>Solanales</taxon>
        <taxon>Solanaceae</taxon>
        <taxon>Nicotianoideae</taxon>
        <taxon>Nicotianeae</taxon>
        <taxon>Nicotiana</taxon>
    </lineage>
</organism>
<protein>
    <recommendedName>
        <fullName evidence="1">Photosystem II protein D1</fullName>
        <shortName evidence="1">PSII D1 protein</shortName>
        <ecNumber evidence="1">1.10.3.9</ecNumber>
    </recommendedName>
    <alternativeName>
        <fullName evidence="1">Photosystem II Q(B) protein</fullName>
    </alternativeName>
</protein>
<evidence type="ECO:0000255" key="1">
    <source>
        <dbReference type="HAMAP-Rule" id="MF_01379"/>
    </source>
</evidence>
<feature type="initiator methionine" description="Removed" evidence="1">
    <location>
        <position position="1"/>
    </location>
</feature>
<feature type="chain" id="PRO_0000090455" description="Photosystem II protein D1" evidence="1">
    <location>
        <begin position="2"/>
        <end position="344"/>
    </location>
</feature>
<feature type="propeptide" id="PRO_0000316465" evidence="1">
    <location>
        <begin position="345"/>
        <end position="353"/>
    </location>
</feature>
<feature type="transmembrane region" description="Helical" evidence="1">
    <location>
        <begin position="29"/>
        <end position="46"/>
    </location>
</feature>
<feature type="transmembrane region" description="Helical" evidence="1">
    <location>
        <begin position="118"/>
        <end position="133"/>
    </location>
</feature>
<feature type="transmembrane region" description="Helical" evidence="1">
    <location>
        <begin position="142"/>
        <end position="156"/>
    </location>
</feature>
<feature type="transmembrane region" description="Helical" evidence="1">
    <location>
        <begin position="197"/>
        <end position="218"/>
    </location>
</feature>
<feature type="transmembrane region" description="Helical" evidence="1">
    <location>
        <begin position="274"/>
        <end position="288"/>
    </location>
</feature>
<feature type="binding site" description="axial binding residue" evidence="1">
    <location>
        <position position="118"/>
    </location>
    <ligand>
        <name>chlorophyll a</name>
        <dbReference type="ChEBI" id="CHEBI:58416"/>
        <label>ChlzD1</label>
    </ligand>
    <ligandPart>
        <name>Mg</name>
        <dbReference type="ChEBI" id="CHEBI:25107"/>
    </ligandPart>
</feature>
<feature type="binding site" evidence="1">
    <location>
        <position position="126"/>
    </location>
    <ligand>
        <name>pheophytin a</name>
        <dbReference type="ChEBI" id="CHEBI:136840"/>
        <label>D1</label>
    </ligand>
</feature>
<feature type="binding site" evidence="1">
    <location>
        <position position="170"/>
    </location>
    <ligand>
        <name>[CaMn4O5] cluster</name>
        <dbReference type="ChEBI" id="CHEBI:189552"/>
    </ligand>
</feature>
<feature type="binding site" evidence="1">
    <location>
        <position position="189"/>
    </location>
    <ligand>
        <name>[CaMn4O5] cluster</name>
        <dbReference type="ChEBI" id="CHEBI:189552"/>
    </ligand>
</feature>
<feature type="binding site" description="axial binding residue" evidence="1">
    <location>
        <position position="198"/>
    </location>
    <ligand>
        <name>chlorophyll a</name>
        <dbReference type="ChEBI" id="CHEBI:58416"/>
        <label>PD1</label>
    </ligand>
    <ligandPart>
        <name>Mg</name>
        <dbReference type="ChEBI" id="CHEBI:25107"/>
    </ligandPart>
</feature>
<feature type="binding site" evidence="1">
    <location>
        <position position="215"/>
    </location>
    <ligand>
        <name>a quinone</name>
        <dbReference type="ChEBI" id="CHEBI:132124"/>
        <label>B</label>
    </ligand>
</feature>
<feature type="binding site" evidence="1">
    <location>
        <position position="215"/>
    </location>
    <ligand>
        <name>Fe cation</name>
        <dbReference type="ChEBI" id="CHEBI:24875"/>
        <note>ligand shared with heterodimeric partner</note>
    </ligand>
</feature>
<feature type="binding site" evidence="1">
    <location>
        <begin position="264"/>
        <end position="265"/>
    </location>
    <ligand>
        <name>a quinone</name>
        <dbReference type="ChEBI" id="CHEBI:132124"/>
        <label>B</label>
    </ligand>
</feature>
<feature type="binding site" evidence="1">
    <location>
        <position position="272"/>
    </location>
    <ligand>
        <name>Fe cation</name>
        <dbReference type="ChEBI" id="CHEBI:24875"/>
        <note>ligand shared with heterodimeric partner</note>
    </ligand>
</feature>
<feature type="binding site" evidence="1">
    <location>
        <position position="332"/>
    </location>
    <ligand>
        <name>[CaMn4O5] cluster</name>
        <dbReference type="ChEBI" id="CHEBI:189552"/>
    </ligand>
</feature>
<feature type="binding site" evidence="1">
    <location>
        <position position="333"/>
    </location>
    <ligand>
        <name>[CaMn4O5] cluster</name>
        <dbReference type="ChEBI" id="CHEBI:189552"/>
    </ligand>
</feature>
<feature type="binding site" evidence="1">
    <location>
        <position position="342"/>
    </location>
    <ligand>
        <name>[CaMn4O5] cluster</name>
        <dbReference type="ChEBI" id="CHEBI:189552"/>
    </ligand>
</feature>
<feature type="binding site" evidence="1">
    <location>
        <position position="344"/>
    </location>
    <ligand>
        <name>[CaMn4O5] cluster</name>
        <dbReference type="ChEBI" id="CHEBI:189552"/>
    </ligand>
</feature>
<feature type="site" description="Tyrosine radical intermediate" evidence="1">
    <location>
        <position position="161"/>
    </location>
</feature>
<feature type="site" description="Stabilizes free radical intermediate" evidence="1">
    <location>
        <position position="190"/>
    </location>
</feature>
<feature type="site" description="Cleavage; by CTPA" evidence="1">
    <location>
        <begin position="344"/>
        <end position="345"/>
    </location>
</feature>
<feature type="modified residue" description="N-acetylthreonine" evidence="1">
    <location>
        <position position="2"/>
    </location>
</feature>
<feature type="modified residue" description="Phosphothreonine" evidence="1">
    <location>
        <position position="2"/>
    </location>
</feature>
<geneLocation type="chloroplast"/>
<name>PSBA_NICPL</name>
<comment type="function">
    <text evidence="1">Photosystem II (PSII) is a light-driven water:plastoquinone oxidoreductase that uses light energy to abstract electrons from H(2)O, generating O(2) and a proton gradient subsequently used for ATP formation. It consists of a core antenna complex that captures photons, and an electron transfer chain that converts photonic excitation into a charge separation. The D1/D2 (PsbA/PsbD) reaction center heterodimer binds P680, the primary electron donor of PSII as well as several subsequent electron acceptors.</text>
</comment>
<comment type="catalytic activity">
    <reaction evidence="1">
        <text>2 a plastoquinone + 4 hnu + 2 H2O = 2 a plastoquinol + O2</text>
        <dbReference type="Rhea" id="RHEA:36359"/>
        <dbReference type="Rhea" id="RHEA-COMP:9561"/>
        <dbReference type="Rhea" id="RHEA-COMP:9562"/>
        <dbReference type="ChEBI" id="CHEBI:15377"/>
        <dbReference type="ChEBI" id="CHEBI:15379"/>
        <dbReference type="ChEBI" id="CHEBI:17757"/>
        <dbReference type="ChEBI" id="CHEBI:30212"/>
        <dbReference type="ChEBI" id="CHEBI:62192"/>
        <dbReference type="EC" id="1.10.3.9"/>
    </reaction>
</comment>
<comment type="cofactor">
    <text evidence="1">The D1/D2 heterodimer binds P680, chlorophylls that are the primary electron donor of PSII, and subsequent electron acceptors. It shares a non-heme iron and each subunit binds pheophytin, quinone, additional chlorophylls, carotenoids and lipids. D1 provides most of the ligands for the Mn4-Ca-O5 cluster of the oxygen-evolving complex (OEC). There is also a Cl(-1) ion associated with D1 and D2, which is required for oxygen evolution. The PSII complex binds additional chlorophylls, carotenoids and specific lipids.</text>
</comment>
<comment type="subunit">
    <text evidence="1">PSII is composed of 1 copy each of membrane proteins PsbA, PsbB, PsbC, PsbD, PsbE, PsbF, PsbH, PsbI, PsbJ, PsbK, PsbL, PsbM, PsbT, PsbX, PsbY, PsbZ, Psb30/Ycf12, at least 3 peripheral proteins of the oxygen-evolving complex and a large number of cofactors. It forms dimeric complexes.</text>
</comment>
<comment type="subcellular location">
    <subcellularLocation>
        <location evidence="1">Plastid</location>
        <location evidence="1">Chloroplast thylakoid membrane</location>
        <topology evidence="1">Multi-pass membrane protein</topology>
    </subcellularLocation>
</comment>
<comment type="PTM">
    <text evidence="1">Tyr-161 forms a radical intermediate that is referred to as redox-active TyrZ, YZ or Y-Z.</text>
</comment>
<comment type="PTM">
    <text evidence="1">C-terminally processed by CTPA; processing is essential to allow assembly of the oxygen-evolving complex and thus photosynthetic growth.</text>
</comment>
<comment type="miscellaneous">
    <text evidence="1">2 of the reaction center chlorophylls (ChlD1 and ChlD2) are entirely coordinated by water.</text>
</comment>
<comment type="miscellaneous">
    <text evidence="1">Herbicides such as atrazine, BNT, diuron or ioxynil bind in the Q(B) binding site and block subsequent electron transfer.</text>
</comment>
<comment type="similarity">
    <text evidence="1">Belongs to the reaction center PufL/M/PsbA/D family.</text>
</comment>
<proteinExistence type="inferred from homology"/>